<sequence>MKVLSLIFVIFSVLVLFASAKDPVCDQPKAVGRCFAAFPKFYYNSSSGQCQAFIYGGCGGNENNFNTLEECNAKCA</sequence>
<proteinExistence type="evidence at protein level"/>
<keyword id="KW-1203">Blood coagulation cascade inhibiting toxin</keyword>
<keyword id="KW-0903">Direct protein sequencing</keyword>
<keyword id="KW-1015">Disulfide bond</keyword>
<keyword id="KW-1199">Hemostasis impairing toxin</keyword>
<keyword id="KW-0646">Protease inhibitor</keyword>
<keyword id="KW-0964">Secreted</keyword>
<keyword id="KW-0722">Serine protease inhibitor</keyword>
<keyword id="KW-0732">Signal</keyword>
<keyword id="KW-0800">Toxin</keyword>
<comment type="function">
    <text evidence="2">Potent anticoagulant protein that inhibits the hydrolytic activities of all serine proteases tested (trypsin, thrombin, elastase, and chymotrypsin), with the highest efficacy on thrombin.</text>
</comment>
<comment type="subcellular location">
    <subcellularLocation>
        <location evidence="2">Secreted</location>
    </subcellularLocation>
</comment>
<comment type="tissue specificity">
    <text evidence="4">Expressed in salivary glands.</text>
</comment>
<comment type="mass spectrometry"/>
<organism>
    <name type="scientific">Tabanus yao</name>
    <name type="common">Horsefly</name>
    <dbReference type="NCBI Taxonomy" id="485572"/>
    <lineage>
        <taxon>Eukaryota</taxon>
        <taxon>Metazoa</taxon>
        <taxon>Ecdysozoa</taxon>
        <taxon>Arthropoda</taxon>
        <taxon>Hexapoda</taxon>
        <taxon>Insecta</taxon>
        <taxon>Pterygota</taxon>
        <taxon>Neoptera</taxon>
        <taxon>Endopterygota</taxon>
        <taxon>Diptera</taxon>
        <taxon>Brachycera</taxon>
        <taxon>Tabanomorpha</taxon>
        <taxon>Tabanoidea</taxon>
        <taxon>Tabanidae</taxon>
        <taxon>Tabanus</taxon>
    </lineage>
</organism>
<evidence type="ECO:0000255" key="1">
    <source>
        <dbReference type="PROSITE-ProRule" id="PRU00031"/>
    </source>
</evidence>
<evidence type="ECO:0000269" key="2">
    <source>
    </source>
</evidence>
<evidence type="ECO:0000303" key="3">
    <source>
    </source>
</evidence>
<evidence type="ECO:0000305" key="4">
    <source>
    </source>
</evidence>
<evidence type="ECO:0000312" key="5">
    <source>
        <dbReference type="EMBL" id="ACS72289.1"/>
    </source>
</evidence>
<protein>
    <recommendedName>
        <fullName evidence="3">Tabkunin 2</fullName>
    </recommendedName>
    <alternativeName>
        <fullName evidence="5">Serine protease inhibitor 2</fullName>
    </alternativeName>
</protein>
<accession>C8YJ94</accession>
<name>KUN2_TABYA</name>
<feature type="signal peptide" evidence="4">
    <location>
        <begin position="1"/>
        <end position="20"/>
    </location>
</feature>
<feature type="chain" id="PRO_5002994607" description="Tabkunin 2" evidence="4">
    <location>
        <begin position="21"/>
        <end position="76"/>
    </location>
</feature>
<feature type="domain" description="BPTI/Kunitz inhibitor" evidence="1">
    <location>
        <begin position="25"/>
        <end position="75"/>
    </location>
</feature>
<feature type="disulfide bond" evidence="1">
    <location>
        <begin position="25"/>
        <end position="75"/>
    </location>
</feature>
<feature type="disulfide bond" evidence="1">
    <location>
        <begin position="34"/>
        <end position="58"/>
    </location>
</feature>
<feature type="disulfide bond" evidence="1">
    <location>
        <begin position="50"/>
        <end position="71"/>
    </location>
</feature>
<reference evidence="5" key="1">
    <citation type="journal article" date="2009" name="Mol. Cell. Proteomics">
        <title>Anti-thrombosis repertoire of blood-feeding horsefly salivary glands.</title>
        <authorList>
            <person name="Ma D."/>
            <person name="Wang Y."/>
            <person name="Yang H."/>
            <person name="Wu J."/>
            <person name="An S."/>
            <person name="Gao L."/>
            <person name="Xu X."/>
            <person name="Lai R."/>
        </authorList>
    </citation>
    <scope>NUCLEOTIDE SEQUENCE [MRNA]</scope>
    <scope>PROTEIN SEQUENCE OF 21-45</scope>
    <scope>SUBCELLULAR LOCATION</scope>
    <scope>MASS SPECTROMETRY</scope>
    <scope>FUNCTION</scope>
    <source>
        <tissue>Salivary gland</tissue>
    </source>
</reference>
<dbReference type="EMBL" id="FJ469601">
    <property type="protein sequence ID" value="ACS72289.1"/>
    <property type="molecule type" value="mRNA"/>
</dbReference>
<dbReference type="SMR" id="C8YJ94"/>
<dbReference type="MEROPS" id="I02.026"/>
<dbReference type="GO" id="GO:0005615">
    <property type="term" value="C:extracellular space"/>
    <property type="evidence" value="ECO:0007669"/>
    <property type="project" value="TreeGrafter"/>
</dbReference>
<dbReference type="GO" id="GO:0004867">
    <property type="term" value="F:serine-type endopeptidase inhibitor activity"/>
    <property type="evidence" value="ECO:0007669"/>
    <property type="project" value="UniProtKB-KW"/>
</dbReference>
<dbReference type="GO" id="GO:0090729">
    <property type="term" value="F:toxin activity"/>
    <property type="evidence" value="ECO:0007669"/>
    <property type="project" value="UniProtKB-KW"/>
</dbReference>
<dbReference type="CDD" id="cd00109">
    <property type="entry name" value="Kunitz-type"/>
    <property type="match status" value="1"/>
</dbReference>
<dbReference type="FunFam" id="4.10.410.10:FF:000021">
    <property type="entry name" value="Serine protease inhibitor, putative"/>
    <property type="match status" value="1"/>
</dbReference>
<dbReference type="Gene3D" id="4.10.410.10">
    <property type="entry name" value="Pancreatic trypsin inhibitor Kunitz domain"/>
    <property type="match status" value="1"/>
</dbReference>
<dbReference type="InterPro" id="IPR002223">
    <property type="entry name" value="Kunitz_BPTI"/>
</dbReference>
<dbReference type="InterPro" id="IPR036880">
    <property type="entry name" value="Kunitz_BPTI_sf"/>
</dbReference>
<dbReference type="InterPro" id="IPR020901">
    <property type="entry name" value="Prtase_inh_Kunz-CS"/>
</dbReference>
<dbReference type="InterPro" id="IPR050098">
    <property type="entry name" value="TFPI/VKTCI-like"/>
</dbReference>
<dbReference type="PANTHER" id="PTHR10083">
    <property type="entry name" value="KUNITZ-TYPE PROTEASE INHIBITOR-RELATED"/>
    <property type="match status" value="1"/>
</dbReference>
<dbReference type="PANTHER" id="PTHR10083:SF376">
    <property type="entry name" value="SERINE PEPTIDASE INHIBITOR, KUNITZ TYPE, 3"/>
    <property type="match status" value="1"/>
</dbReference>
<dbReference type="Pfam" id="PF00014">
    <property type="entry name" value="Kunitz_BPTI"/>
    <property type="match status" value="1"/>
</dbReference>
<dbReference type="PRINTS" id="PR00759">
    <property type="entry name" value="BASICPTASE"/>
</dbReference>
<dbReference type="SMART" id="SM00131">
    <property type="entry name" value="KU"/>
    <property type="match status" value="1"/>
</dbReference>
<dbReference type="SUPFAM" id="SSF57362">
    <property type="entry name" value="BPTI-like"/>
    <property type="match status" value="1"/>
</dbReference>
<dbReference type="PROSITE" id="PS00280">
    <property type="entry name" value="BPTI_KUNITZ_1"/>
    <property type="match status" value="1"/>
</dbReference>
<dbReference type="PROSITE" id="PS50279">
    <property type="entry name" value="BPTI_KUNITZ_2"/>
    <property type="match status" value="1"/>
</dbReference>